<reference key="1">
    <citation type="journal article" date="1996" name="Science">
        <title>Complete genome sequence of the methanogenic archaeon, Methanococcus jannaschii.</title>
        <authorList>
            <person name="Bult C.J."/>
            <person name="White O."/>
            <person name="Olsen G.J."/>
            <person name="Zhou L."/>
            <person name="Fleischmann R.D."/>
            <person name="Sutton G.G."/>
            <person name="Blake J.A."/>
            <person name="FitzGerald L.M."/>
            <person name="Clayton R.A."/>
            <person name="Gocayne J.D."/>
            <person name="Kerlavage A.R."/>
            <person name="Dougherty B.A."/>
            <person name="Tomb J.-F."/>
            <person name="Adams M.D."/>
            <person name="Reich C.I."/>
            <person name="Overbeek R."/>
            <person name="Kirkness E.F."/>
            <person name="Weinstock K.G."/>
            <person name="Merrick J.M."/>
            <person name="Glodek A."/>
            <person name="Scott J.L."/>
            <person name="Geoghagen N.S.M."/>
            <person name="Weidman J.F."/>
            <person name="Fuhrmann J.L."/>
            <person name="Nguyen D."/>
            <person name="Utterback T.R."/>
            <person name="Kelley J.M."/>
            <person name="Peterson J.D."/>
            <person name="Sadow P.W."/>
            <person name="Hanna M.C."/>
            <person name="Cotton M.D."/>
            <person name="Roberts K.M."/>
            <person name="Hurst M.A."/>
            <person name="Kaine B.P."/>
            <person name="Borodovsky M."/>
            <person name="Klenk H.-P."/>
            <person name="Fraser C.M."/>
            <person name="Smith H.O."/>
            <person name="Woese C.R."/>
            <person name="Venter J.C."/>
        </authorList>
    </citation>
    <scope>NUCLEOTIDE SEQUENCE [LARGE SCALE GENOMIC DNA]</scope>
    <source>
        <strain>ATCC 43067 / DSM 2661 / JAL-1 / JCM 10045 / NBRC 100440</strain>
    </source>
</reference>
<accession>Q60353</accession>
<feature type="chain" id="PRO_0000106667" description="Uncharacterized protein MJ0045">
    <location>
        <begin position="1"/>
        <end position="221"/>
    </location>
</feature>
<protein>
    <recommendedName>
        <fullName>Uncharacterized protein MJ0045</fullName>
    </recommendedName>
</protein>
<sequence length="221" mass="26679">MRYLNLKDTVLLGRNFNEYVRMFNLNEDLLSNKILDVASGVSSFCAEGNKKGYNITSSDKIYNLKPEEIEEKCKKDLDFMEKHLRGMFKNNFNWNEFKTVDEWKKTRERTYKTFIEDYKTNRKRYIYTTYPKTNFKDDEFAISLVGHFLLLYDNILNYQFHKETIDELLRISEEIRIFPILNLRGEKSIFLDKILKEYKARIEKTDYEFMKGGNKVLIIRR</sequence>
<dbReference type="EMBL" id="L77117">
    <property type="protein sequence ID" value="AAB98025.1"/>
    <property type="molecule type" value="Genomic_DNA"/>
</dbReference>
<dbReference type="PIR" id="E64305">
    <property type="entry name" value="E64305"/>
</dbReference>
<dbReference type="RefSeq" id="WP_010869536.1">
    <property type="nucleotide sequence ID" value="NC_000909.1"/>
</dbReference>
<dbReference type="STRING" id="243232.MJ_0045"/>
<dbReference type="PaxDb" id="243232-MJ_0045"/>
<dbReference type="EnsemblBacteria" id="AAB98025">
    <property type="protein sequence ID" value="AAB98025"/>
    <property type="gene ID" value="MJ_0045"/>
</dbReference>
<dbReference type="GeneID" id="1450883"/>
<dbReference type="KEGG" id="mja:MJ_0045"/>
<dbReference type="eggNOG" id="arCOG04855">
    <property type="taxonomic scope" value="Archaea"/>
</dbReference>
<dbReference type="HOGENOM" id="CLU_077876_1_0_2"/>
<dbReference type="InParanoid" id="Q60353"/>
<dbReference type="OrthoDB" id="175699at2157"/>
<dbReference type="Proteomes" id="UP000000805">
    <property type="component" value="Chromosome"/>
</dbReference>
<name>Y045_METJA</name>
<keyword id="KW-1185">Reference proteome</keyword>
<proteinExistence type="predicted"/>
<gene>
    <name type="ordered locus">MJ0045</name>
</gene>
<organism>
    <name type="scientific">Methanocaldococcus jannaschii (strain ATCC 43067 / DSM 2661 / JAL-1 / JCM 10045 / NBRC 100440)</name>
    <name type="common">Methanococcus jannaschii</name>
    <dbReference type="NCBI Taxonomy" id="243232"/>
    <lineage>
        <taxon>Archaea</taxon>
        <taxon>Methanobacteriati</taxon>
        <taxon>Methanobacteriota</taxon>
        <taxon>Methanomada group</taxon>
        <taxon>Methanococci</taxon>
        <taxon>Methanococcales</taxon>
        <taxon>Methanocaldococcaceae</taxon>
        <taxon>Methanocaldococcus</taxon>
    </lineage>
</organism>